<proteinExistence type="inferred from homology"/>
<accession>P52309</accession>
<comment type="similarity">
    <text evidence="1">Belongs to the UPF0178 family.</text>
</comment>
<comment type="sequence caution" evidence="1">
    <conflict type="erroneous initiation">
        <sequence resource="EMBL-CDS" id="CAC99534"/>
    </conflict>
</comment>
<reference key="1">
    <citation type="journal article" date="1994" name="Gene">
        <title>Characterization of the macromolecular synthesis (MMS) operon from Listeria monocytogenes.</title>
        <authorList>
            <person name="Metzger R."/>
            <person name="Brown D.P."/>
            <person name="Grealish P."/>
            <person name="Staver M.J."/>
            <person name="Versalovic J."/>
            <person name="Lupski J.R."/>
            <person name="Katz L."/>
        </authorList>
    </citation>
    <scope>NUCLEOTIDE SEQUENCE [GENOMIC DNA]</scope>
    <source>
        <strain>ATCC 13932 / LMG 21264 / NCTC 10527 / SLCC 2375</strain>
    </source>
</reference>
<reference key="2">
    <citation type="journal article" date="2001" name="Science">
        <title>Comparative genomics of Listeria species.</title>
        <authorList>
            <person name="Glaser P."/>
            <person name="Frangeul L."/>
            <person name="Buchrieser C."/>
            <person name="Rusniok C."/>
            <person name="Amend A."/>
            <person name="Baquero F."/>
            <person name="Berche P."/>
            <person name="Bloecker H."/>
            <person name="Brandt P."/>
            <person name="Chakraborty T."/>
            <person name="Charbit A."/>
            <person name="Chetouani F."/>
            <person name="Couve E."/>
            <person name="de Daruvar A."/>
            <person name="Dehoux P."/>
            <person name="Domann E."/>
            <person name="Dominguez-Bernal G."/>
            <person name="Duchaud E."/>
            <person name="Durant L."/>
            <person name="Dussurget O."/>
            <person name="Entian K.-D."/>
            <person name="Fsihi H."/>
            <person name="Garcia-del Portillo F."/>
            <person name="Garrido P."/>
            <person name="Gautier L."/>
            <person name="Goebel W."/>
            <person name="Gomez-Lopez N."/>
            <person name="Hain T."/>
            <person name="Hauf J."/>
            <person name="Jackson D."/>
            <person name="Jones L.-M."/>
            <person name="Kaerst U."/>
            <person name="Kreft J."/>
            <person name="Kuhn M."/>
            <person name="Kunst F."/>
            <person name="Kurapkat G."/>
            <person name="Madueno E."/>
            <person name="Maitournam A."/>
            <person name="Mata Vicente J."/>
            <person name="Ng E."/>
            <person name="Nedjari H."/>
            <person name="Nordsiek G."/>
            <person name="Novella S."/>
            <person name="de Pablos B."/>
            <person name="Perez-Diaz J.-C."/>
            <person name="Purcell R."/>
            <person name="Remmel B."/>
            <person name="Rose M."/>
            <person name="Schlueter T."/>
            <person name="Simoes N."/>
            <person name="Tierrez A."/>
            <person name="Vazquez-Boland J.-A."/>
            <person name="Voss H."/>
            <person name="Wehland J."/>
            <person name="Cossart P."/>
        </authorList>
    </citation>
    <scope>NUCLEOTIDE SEQUENCE [LARGE SCALE GENOMIC DNA]</scope>
    <source>
        <strain>ATCC BAA-679 / EGD-e</strain>
    </source>
</reference>
<organism>
    <name type="scientific">Listeria monocytogenes serovar 1/2a (strain ATCC BAA-679 / EGD-e)</name>
    <dbReference type="NCBI Taxonomy" id="169963"/>
    <lineage>
        <taxon>Bacteria</taxon>
        <taxon>Bacillati</taxon>
        <taxon>Bacillota</taxon>
        <taxon>Bacilli</taxon>
        <taxon>Bacillales</taxon>
        <taxon>Listeriaceae</taxon>
        <taxon>Listeria</taxon>
    </lineage>
</organism>
<name>Y1456_LISMO</name>
<feature type="chain" id="PRO_0000175989" description="UPF0178 protein Lmo1456">
    <location>
        <begin position="1"/>
        <end position="149"/>
    </location>
</feature>
<feature type="sequence conflict" description="In Ref. 1; AAC43304." evidence="1" ref="1">
    <original>C</original>
    <variation>Y</variation>
    <location>
        <position position="3"/>
    </location>
</feature>
<feature type="sequence conflict" description="In Ref. 1; AAC43304." evidence="1" ref="1">
    <original>Q</original>
    <variation>K</variation>
    <location>
        <position position="6"/>
    </location>
</feature>
<feature type="sequence conflict" description="In Ref. 1; AAC43304." evidence="1" ref="1">
    <original>KE</original>
    <variation>EH</variation>
    <location>
        <begin position="25"/>
        <end position="26"/>
    </location>
</feature>
<feature type="sequence conflict" description="In Ref. 1; AAC43304." evidence="1" ref="1">
    <original>EVT</original>
    <variation>DVI</variation>
    <location>
        <begin position="30"/>
        <end position="32"/>
    </location>
</feature>
<feature type="sequence conflict" description="In Ref. 1; AAC43304." evidence="1" ref="1">
    <original>E</original>
    <variation>D</variation>
    <location>
        <position position="117"/>
    </location>
</feature>
<evidence type="ECO:0000305" key="1"/>
<gene>
    <name type="ordered locus">lmo1456</name>
</gene>
<protein>
    <recommendedName>
        <fullName>UPF0178 protein Lmo1456</fullName>
        <shortName>P17</shortName>
    </recommendedName>
</protein>
<dbReference type="EMBL" id="U13165">
    <property type="protein sequence ID" value="AAC43304.1"/>
    <property type="molecule type" value="Genomic_DNA"/>
</dbReference>
<dbReference type="EMBL" id="AL591979">
    <property type="protein sequence ID" value="CAC99534.1"/>
    <property type="status" value="ALT_INIT"/>
    <property type="molecule type" value="Genomic_DNA"/>
</dbReference>
<dbReference type="PIR" id="AH1256">
    <property type="entry name" value="AH1256"/>
</dbReference>
<dbReference type="RefSeq" id="NP_464981.1">
    <property type="nucleotide sequence ID" value="NC_003210.1"/>
</dbReference>
<dbReference type="STRING" id="169963.gene:17594113"/>
<dbReference type="PaxDb" id="169963-lmo1456"/>
<dbReference type="EnsemblBacteria" id="CAC99534">
    <property type="protein sequence ID" value="CAC99534"/>
    <property type="gene ID" value="CAC99534"/>
</dbReference>
<dbReference type="GeneID" id="986822"/>
<dbReference type="KEGG" id="lmo:lmo1456"/>
<dbReference type="PATRIC" id="fig|169963.11.peg.1495"/>
<dbReference type="eggNOG" id="COG1671">
    <property type="taxonomic scope" value="Bacteria"/>
</dbReference>
<dbReference type="HOGENOM" id="CLU_106619_0_0_9"/>
<dbReference type="OrthoDB" id="9798918at2"/>
<dbReference type="PhylomeDB" id="P52309"/>
<dbReference type="Proteomes" id="UP000000817">
    <property type="component" value="Chromosome"/>
</dbReference>
<dbReference type="CDD" id="cd18720">
    <property type="entry name" value="PIN_YqxD-like"/>
    <property type="match status" value="1"/>
</dbReference>
<dbReference type="HAMAP" id="MF_00489">
    <property type="entry name" value="UPF0178"/>
    <property type="match status" value="1"/>
</dbReference>
<dbReference type="InterPro" id="IPR003791">
    <property type="entry name" value="UPF0178"/>
</dbReference>
<dbReference type="NCBIfam" id="NF001095">
    <property type="entry name" value="PRK00124.1"/>
    <property type="match status" value="1"/>
</dbReference>
<dbReference type="PANTHER" id="PTHR35146">
    <property type="entry name" value="UPF0178 PROTEIN YAII"/>
    <property type="match status" value="1"/>
</dbReference>
<dbReference type="PANTHER" id="PTHR35146:SF1">
    <property type="entry name" value="UPF0178 PROTEIN YAII"/>
    <property type="match status" value="1"/>
</dbReference>
<dbReference type="Pfam" id="PF02639">
    <property type="entry name" value="DUF188"/>
    <property type="match status" value="1"/>
</dbReference>
<sequence length="149" mass="17020">MECVPQILVDADACPVKAEIKQVAKEFQLEVTFVASFNHYSVNTNGENWIFVDTGKESADMRMMNLAKKGDIIVTQDIGLASILLAKGTFVFSNRGELYREEEMSLMLDIRYRHAKERQQGKYSKGPKAMSDQDRSLFKDRLTTFLQNK</sequence>
<keyword id="KW-1185">Reference proteome</keyword>